<accession>Q5JWR5</accession>
<accession>Q86XV1</accession>
<accession>Q9H5J5</accession>
<accession>Q9NSL4</accession>
<accession>Q9UPN5</accession>
<accession>Q9Y414</accession>
<protein>
    <recommendedName>
        <fullName evidence="5">Protein DOP1A</fullName>
    </recommendedName>
</protein>
<proteinExistence type="evidence at protein level"/>
<comment type="function">
    <text evidence="1">May be involved in protein traffic between late Golgi and early endosomes.</text>
</comment>
<comment type="subcellular location">
    <subcellularLocation>
        <location evidence="1">Golgi apparatus membrane</location>
        <topology evidence="1">Peripheral membrane protein</topology>
    </subcellularLocation>
</comment>
<comment type="similarity">
    <text evidence="5">Belongs to the DOP1 family.</text>
</comment>
<comment type="sequence caution" evidence="5">
    <conflict type="erroneous initiation">
        <sequence resource="EMBL-CDS" id="BAB15631"/>
    </conflict>
    <text>Truncated N-terminus.</text>
</comment>
<dbReference type="EMBL" id="AL121716">
    <property type="status" value="NOT_ANNOTATED_CDS"/>
    <property type="molecule type" value="Genomic_DNA"/>
</dbReference>
<dbReference type="EMBL" id="AL139333">
    <property type="status" value="NOT_ANNOTATED_CDS"/>
    <property type="molecule type" value="Genomic_DNA"/>
</dbReference>
<dbReference type="EMBL" id="AB029040">
    <property type="protein sequence ID" value="BAA83069.2"/>
    <property type="molecule type" value="mRNA"/>
</dbReference>
<dbReference type="EMBL" id="AL050080">
    <property type="protein sequence ID" value="CAB43259.1"/>
    <property type="molecule type" value="mRNA"/>
</dbReference>
<dbReference type="EMBL" id="AL162056">
    <property type="protein sequence ID" value="CAB82395.1"/>
    <property type="molecule type" value="mRNA"/>
</dbReference>
<dbReference type="EMBL" id="AK027030">
    <property type="protein sequence ID" value="BAB15631.1"/>
    <property type="status" value="ALT_INIT"/>
    <property type="molecule type" value="mRNA"/>
</dbReference>
<dbReference type="EMBL" id="BC048342">
    <property type="protein sequence ID" value="AAH48342.1"/>
    <property type="molecule type" value="mRNA"/>
</dbReference>
<dbReference type="CCDS" id="CCDS4996.1"/>
<dbReference type="PIR" id="T47141">
    <property type="entry name" value="T47141"/>
</dbReference>
<dbReference type="RefSeq" id="NP_055833.2">
    <property type="nucleotide sequence ID" value="NM_015018.3"/>
</dbReference>
<dbReference type="RefSeq" id="XP_016866052.1">
    <property type="nucleotide sequence ID" value="XM_017010563.1"/>
</dbReference>
<dbReference type="RefSeq" id="XP_016866053.1">
    <property type="nucleotide sequence ID" value="XM_017010564.2"/>
</dbReference>
<dbReference type="BioGRID" id="116672">
    <property type="interactions" value="19"/>
</dbReference>
<dbReference type="FunCoup" id="Q5JWR5">
    <property type="interactions" value="1630"/>
</dbReference>
<dbReference type="IntAct" id="Q5JWR5">
    <property type="interactions" value="9"/>
</dbReference>
<dbReference type="STRING" id="9606.ENSP00000237163"/>
<dbReference type="GlyGen" id="Q5JWR5">
    <property type="glycosylation" value="2 sites, 1 O-linked glycan (2 sites)"/>
</dbReference>
<dbReference type="iPTMnet" id="Q5JWR5"/>
<dbReference type="PhosphoSitePlus" id="Q5JWR5"/>
<dbReference type="BioMuta" id="DOPEY1"/>
<dbReference type="DMDM" id="156630499"/>
<dbReference type="jPOST" id="Q5JWR5"/>
<dbReference type="MassIVE" id="Q5JWR5"/>
<dbReference type="PaxDb" id="9606-ENSP00000237163"/>
<dbReference type="PeptideAtlas" id="Q5JWR5"/>
<dbReference type="ProteomicsDB" id="63399"/>
<dbReference type="Pumba" id="Q5JWR5"/>
<dbReference type="Antibodypedia" id="31656">
    <property type="antibodies" value="37 antibodies from 15 providers"/>
</dbReference>
<dbReference type="DNASU" id="23033"/>
<dbReference type="Ensembl" id="ENST00000349129.7">
    <property type="protein sequence ID" value="ENSP00000195654.3"/>
    <property type="gene ID" value="ENSG00000083097.15"/>
</dbReference>
<dbReference type="GeneID" id="23033"/>
<dbReference type="KEGG" id="hsa:23033"/>
<dbReference type="MANE-Select" id="ENST00000349129.7">
    <property type="protein sequence ID" value="ENSP00000195654.3"/>
    <property type="RefSeq nucleotide sequence ID" value="NM_015018.4"/>
    <property type="RefSeq protein sequence ID" value="NP_055833.2"/>
</dbReference>
<dbReference type="UCSC" id="uc003pjs.2">
    <property type="organism name" value="human"/>
</dbReference>
<dbReference type="AGR" id="HGNC:21194"/>
<dbReference type="CTD" id="23033"/>
<dbReference type="DisGeNET" id="23033"/>
<dbReference type="GeneCards" id="DOP1A"/>
<dbReference type="HGNC" id="HGNC:21194">
    <property type="gene designation" value="DOP1A"/>
</dbReference>
<dbReference type="HPA" id="ENSG00000083097">
    <property type="expression patterns" value="Low tissue specificity"/>
</dbReference>
<dbReference type="MalaCards" id="DOP1A"/>
<dbReference type="MIM" id="616823">
    <property type="type" value="gene"/>
</dbReference>
<dbReference type="neXtProt" id="NX_Q5JWR5"/>
<dbReference type="OpenTargets" id="ENSG00000083097"/>
<dbReference type="PharmGKB" id="PA134924787"/>
<dbReference type="VEuPathDB" id="HostDB:ENSG00000083097"/>
<dbReference type="eggNOG" id="KOG3613">
    <property type="taxonomic scope" value="Eukaryota"/>
</dbReference>
<dbReference type="GeneTree" id="ENSGT00390000016421"/>
<dbReference type="InParanoid" id="Q5JWR5"/>
<dbReference type="OrthoDB" id="297643at2759"/>
<dbReference type="PAN-GO" id="Q5JWR5">
    <property type="GO annotations" value="2 GO annotations based on evolutionary models"/>
</dbReference>
<dbReference type="PhylomeDB" id="Q5JWR5"/>
<dbReference type="TreeFam" id="TF316855"/>
<dbReference type="PathwayCommons" id="Q5JWR5"/>
<dbReference type="SignaLink" id="Q5JWR5"/>
<dbReference type="BioGRID-ORCS" id="23033">
    <property type="hits" value="8 hits in 1144 CRISPR screens"/>
</dbReference>
<dbReference type="ChiTaRS" id="DOPEY1">
    <property type="organism name" value="human"/>
</dbReference>
<dbReference type="GenomeRNAi" id="23033"/>
<dbReference type="Pharos" id="Q5JWR5">
    <property type="development level" value="Tdark"/>
</dbReference>
<dbReference type="PRO" id="PR:Q5JWR5"/>
<dbReference type="Proteomes" id="UP000005640">
    <property type="component" value="Chromosome 6"/>
</dbReference>
<dbReference type="RNAct" id="Q5JWR5">
    <property type="molecule type" value="protein"/>
</dbReference>
<dbReference type="Bgee" id="ENSG00000083097">
    <property type="expression patterns" value="Expressed in calcaneal tendon and 193 other cell types or tissues"/>
</dbReference>
<dbReference type="ExpressionAtlas" id="Q5JWR5">
    <property type="expression patterns" value="baseline and differential"/>
</dbReference>
<dbReference type="GO" id="GO:0005829">
    <property type="term" value="C:cytosol"/>
    <property type="evidence" value="ECO:0007669"/>
    <property type="project" value="GOC"/>
</dbReference>
<dbReference type="GO" id="GO:0005768">
    <property type="term" value="C:endosome"/>
    <property type="evidence" value="ECO:0000318"/>
    <property type="project" value="GO_Central"/>
</dbReference>
<dbReference type="GO" id="GO:0000139">
    <property type="term" value="C:Golgi membrane"/>
    <property type="evidence" value="ECO:0007669"/>
    <property type="project" value="UniProtKB-SubCell"/>
</dbReference>
<dbReference type="GO" id="GO:0005798">
    <property type="term" value="C:Golgi-associated vesicle"/>
    <property type="evidence" value="ECO:0007669"/>
    <property type="project" value="Ensembl"/>
</dbReference>
<dbReference type="GO" id="GO:0005802">
    <property type="term" value="C:trans-Golgi network"/>
    <property type="evidence" value="ECO:0000318"/>
    <property type="project" value="GO_Central"/>
</dbReference>
<dbReference type="GO" id="GO:0006895">
    <property type="term" value="P:Golgi to endosome transport"/>
    <property type="evidence" value="ECO:0007669"/>
    <property type="project" value="InterPro"/>
</dbReference>
<dbReference type="GO" id="GO:0015031">
    <property type="term" value="P:protein transport"/>
    <property type="evidence" value="ECO:0007669"/>
    <property type="project" value="UniProtKB-KW"/>
</dbReference>
<dbReference type="InterPro" id="IPR040314">
    <property type="entry name" value="DOP1"/>
</dbReference>
<dbReference type="InterPro" id="IPR056457">
    <property type="entry name" value="DOP1_C"/>
</dbReference>
<dbReference type="InterPro" id="IPR007249">
    <property type="entry name" value="DOP1_N"/>
</dbReference>
<dbReference type="InterPro" id="IPR056459">
    <property type="entry name" value="TPR_DOP1"/>
</dbReference>
<dbReference type="InterPro" id="IPR056458">
    <property type="entry name" value="TPR_DOP1_M"/>
</dbReference>
<dbReference type="PANTHER" id="PTHR14042">
    <property type="entry name" value="DOPEY-RELATED"/>
    <property type="match status" value="1"/>
</dbReference>
<dbReference type="PANTHER" id="PTHR14042:SF22">
    <property type="entry name" value="PROTEIN DOPEY-1"/>
    <property type="match status" value="1"/>
</dbReference>
<dbReference type="Pfam" id="PF24598">
    <property type="entry name" value="DOP1_C"/>
    <property type="match status" value="1"/>
</dbReference>
<dbReference type="Pfam" id="PF04118">
    <property type="entry name" value="Dopey_N"/>
    <property type="match status" value="1"/>
</dbReference>
<dbReference type="Pfam" id="PF24601">
    <property type="entry name" value="TPR_DOP1"/>
    <property type="match status" value="1"/>
</dbReference>
<dbReference type="Pfam" id="PF24597">
    <property type="entry name" value="TPR_DOP1_M"/>
    <property type="match status" value="1"/>
</dbReference>
<organism>
    <name type="scientific">Homo sapiens</name>
    <name type="common">Human</name>
    <dbReference type="NCBI Taxonomy" id="9606"/>
    <lineage>
        <taxon>Eukaryota</taxon>
        <taxon>Metazoa</taxon>
        <taxon>Chordata</taxon>
        <taxon>Craniata</taxon>
        <taxon>Vertebrata</taxon>
        <taxon>Euteleostomi</taxon>
        <taxon>Mammalia</taxon>
        <taxon>Eutheria</taxon>
        <taxon>Euarchontoglires</taxon>
        <taxon>Primates</taxon>
        <taxon>Haplorrhini</taxon>
        <taxon>Catarrhini</taxon>
        <taxon>Hominidae</taxon>
        <taxon>Homo</taxon>
    </lineage>
</organism>
<keyword id="KW-0333">Golgi apparatus</keyword>
<keyword id="KW-0472">Membrane</keyword>
<keyword id="KW-0597">Phosphoprotein</keyword>
<keyword id="KW-0653">Protein transport</keyword>
<keyword id="KW-1267">Proteomics identification</keyword>
<keyword id="KW-1185">Reference proteome</keyword>
<keyword id="KW-0813">Transport</keyword>
<evidence type="ECO:0000250" key="1">
    <source>
        <dbReference type="UniProtKB" id="Q03921"/>
    </source>
</evidence>
<evidence type="ECO:0000250" key="2">
    <source>
        <dbReference type="UniProtKB" id="Q8BL99"/>
    </source>
</evidence>
<evidence type="ECO:0000256" key="3">
    <source>
        <dbReference type="SAM" id="MobiDB-lite"/>
    </source>
</evidence>
<evidence type="ECO:0000269" key="4">
    <source>
    </source>
</evidence>
<evidence type="ECO:0000305" key="5"/>
<evidence type="ECO:0000312" key="6">
    <source>
        <dbReference type="HGNC" id="HGNC:21194"/>
    </source>
</evidence>
<sequence length="2465" mass="277355">MNTEELELLSDSKYRNYVAAIDKALKNFEYSSEWADLISALGKLNKVLQNNAKYQVVPKKLTIGKRLAQCLHPALPGGVHRKALETYEIIFKIIGPKRLAKDLFLYSSGLFPLLANAAMSVKPTLLSLYEIYYLPLGKTLKPGLQGLLTGILPGLEEGSEYYERTNMLLEKVAAAVDQSAFYSALWGSLLTSPAVRLPGITYVLAHLNRKLSMEDQLYIIGSDIELMVEAVSTSVQDSSVLVQRSTLDLILFCFPFHMSQATRPDMIRILSAALHVVLRRDMSLNRRLYAWLLGFDNNGAIIGPRSTRHSNPEEHATYYFTTFSKELLVQAMVGILQVNGFGEENTLMQDLKPFRILISLLDKPELGPVILEDVLIEVFRTLYSQCKAELDLQTEPPFSKDHAQLSSKLRENKKTAELIKTANLLFNSFEPYYMWDYVARWFEECCRRTLHVRLQIGPGDSNDSSELQLTNFCLLVDFLLDIVSLPTRSMRVLCQETYIEIQTEHLPQLLLRMISALTSHLQTLHLSELTDSLRLCSKILSKVQPPLLSASTGGVLQFPSGQNNSVKEWEDKKVSSVSHENPTEVFEDGENPPSSRSSESGFTEFIQYQADRTDDIDRELSEGQGAAAIPIGSTSSETETASTVGSEETIIQTPSVVTQGTATRSRKTAQKTAMQCCLEYVQQFLTRLINLYIIQNNSFSQSLATEHQGDLGREQGETSKWDRNSQGDVKEKNISKQKTSKEYLSAFLAACQLFLECSSFPVYIAEGNHTSELRSEKLETDCEHVQPPQWLQTLMNACSQASDFSVQSVAISLVMDLVGLTQSVAMVTGENINSVEPAQPLSPNQGRVAVVIRPPLTQGNLRYIAEKTEFFKHVALTLWDQLGDGTPQHHQKSVELFYQLHNLVPSSSICEDVISQQLTHKDKKIRMEAHAKFAVLWHLTRDLHINKSSSFVRSFDRSLFIMLDSLNSLDGSTSSVGQAWLNQVLQRHDIARVLEPLLLLLLHPKTQRVSVQRVQAERYWNKSPCYPGEESDKHFMQNFACSNVSQVQLITSKGNGEKPLTMDEIENFSLTVNPLSDRLSLLSTSSETIPMVVSDFDLPDQQIEILQSSDSGCSQSSAGDNLSYEVDPETVNAQEDSQMPKESSPDDDVQQVVFDLICKVVSGLEVESASVTSQLEIEAMPPKCSDIDPDEETIKIEDDSIQQSQNALLSNESSQFLSVSAEGGHECVANGISRNSSSPCISGTTHTLHDSSVASIETKSRQRSHSSIQFSFKEKLSEKVSEKETIVKESGKQPGAKPKVKLARKKDDDKKKSSNEKLKQTSVFFSDGLDLENWYSCGEGDISEIESDMGSPGSRKSPNFNIHPLYQHVLLYLQLYDSSRTLYAFSAIKAILKTNPIAFVNAISTTSVNNAYTPQLSLLQNLLARHRISVMGKDFYSHIPVDSNHNFRSSMYIEILISLCLYYMRSHYPTHVKVTAQDLIGNRNMQMMSIEILTLLFTELAKVIESSAKGFPSFISDMLSKCKVQKVILHCLLSSIFSAQKWHSEKMAGKNLVAVEEGFSEDSLINFSEDEFDNGSTLQSQLLKVLQRLIVLEHRVMTIPEENETGFDFVVSDLEHISPHQPMTSLQYLHAQPITCQGMFLCAVIRALHQHCACKMHPQWIGLITSTLPYMGKVLQRVVVSVTLQLCRNLDNLIQQYKYETGLSDSRPLWMASIIPPDMILTLLEGITAIIHYCLLDPTTQYHQLLVSVDQKHLFEARSGILSILHMIMSSVTLLWSILHQADSSEKMTIAASASLTTINLGATKNLRQQILELLGPISMNHGVHFMAAIAFVWNERRQNKTTTRTKVIPAASEEQLLLVELVRSISVMRAETVIQTVKEVLKQPPAIAKDKKHLSLEVCMLQFFYAYIQRIPVPNLVDSWASLLILLKDSIQLSLPAPGQFLILGVLNEFIMKNPSLENKKDQRDLQDVTHKIVDAIGAIAGSSLEQTTWLRRNLEVKPSPKIMVDGTNLESDVEDMLSPAMETANITPSVYSVHALTLLSEVLAHLLDMVFYSDEKERVIPLLVNIMHYVVPYLRNHSAHNAPSYRACVQLLSSLSGYQYTRRAWKKEAFDLFMDPSFFQMDASCVNHWRAIMDNLMTHDKTTFRDLMTRVAVAQSSSLNLFANRDVELEQRAMLLKRLAFAIFSSEIDQYQKYLPDIQERLVESLRLPQVPTLHSQVFLFFRVLLLRMSPQHLTSLWPTMITELVQVFLLMEQELTADEDISRTSGPSVAGLETTYTGGNGFSTSYNSQRWLNLYLSACKFLDLALALPSENLPQFQMYRWAFIPEASDDSGLEVRRQGIHQREFKPYVVRLAKLLRKRAKKNPEEDNSGRTLGWEPGHLLLTICTVRSMEQLLPFFNVLSQVFNSKVTSRCGGHSGSPILYSNAFPNKDMKLENHKPCSSKARQKIEEMVEKDFLEGMIKT</sequence>
<name>DOP1A_HUMAN</name>
<feature type="chain" id="PRO_0000297947" description="Protein DOP1A">
    <location>
        <begin position="1"/>
        <end position="2465"/>
    </location>
</feature>
<feature type="region of interest" description="Disordered" evidence="3">
    <location>
        <begin position="559"/>
        <end position="600"/>
    </location>
</feature>
<feature type="region of interest" description="Disordered" evidence="3">
    <location>
        <begin position="625"/>
        <end position="646"/>
    </location>
</feature>
<feature type="region of interest" description="Disordered" evidence="3">
    <location>
        <begin position="705"/>
        <end position="733"/>
    </location>
</feature>
<feature type="region of interest" description="Disordered" evidence="3">
    <location>
        <begin position="1282"/>
        <end position="1315"/>
    </location>
</feature>
<feature type="compositionally biased region" description="Low complexity" evidence="3">
    <location>
        <begin position="633"/>
        <end position="646"/>
    </location>
</feature>
<feature type="compositionally biased region" description="Basic and acidic residues" evidence="3">
    <location>
        <begin position="707"/>
        <end position="733"/>
    </location>
</feature>
<feature type="compositionally biased region" description="Basic and acidic residues" evidence="3">
    <location>
        <begin position="1282"/>
        <end position="1291"/>
    </location>
</feature>
<feature type="compositionally biased region" description="Basic and acidic residues" evidence="3">
    <location>
        <begin position="1305"/>
        <end position="1315"/>
    </location>
</feature>
<feature type="modified residue" description="Phosphoserine" evidence="2">
    <location>
        <position position="1266"/>
    </location>
</feature>
<feature type="sequence variant" id="VAR_034690" description="In dbSNP:rs4706980.">
    <original>R</original>
    <variation>Q</variation>
    <location>
        <position position="596"/>
    </location>
</feature>
<feature type="sequence variant" id="VAR_036607" description="In a breast cancer sample; somatic mutation." evidence="4">
    <original>D</original>
    <variation>H</variation>
    <location>
        <position position="1155"/>
    </location>
</feature>
<feature type="sequence variant" id="VAR_034691" description="In dbSNP:rs9444039.">
    <original>Q</original>
    <variation>L</variation>
    <location>
        <position position="1781"/>
    </location>
</feature>
<gene>
    <name evidence="6" type="primary">DOP1A</name>
    <name evidence="6" type="synonym">DOPEY1</name>
    <name type="synonym">KIAA1117</name>
</gene>
<reference key="1">
    <citation type="journal article" date="2003" name="Nature">
        <title>The DNA sequence and analysis of human chromosome 6.</title>
        <authorList>
            <person name="Mungall A.J."/>
            <person name="Palmer S.A."/>
            <person name="Sims S.K."/>
            <person name="Edwards C.A."/>
            <person name="Ashurst J.L."/>
            <person name="Wilming L."/>
            <person name="Jones M.C."/>
            <person name="Horton R."/>
            <person name="Hunt S.E."/>
            <person name="Scott C.E."/>
            <person name="Gilbert J.G.R."/>
            <person name="Clamp M.E."/>
            <person name="Bethel G."/>
            <person name="Milne S."/>
            <person name="Ainscough R."/>
            <person name="Almeida J.P."/>
            <person name="Ambrose K.D."/>
            <person name="Andrews T.D."/>
            <person name="Ashwell R.I.S."/>
            <person name="Babbage A.K."/>
            <person name="Bagguley C.L."/>
            <person name="Bailey J."/>
            <person name="Banerjee R."/>
            <person name="Barker D.J."/>
            <person name="Barlow K.F."/>
            <person name="Bates K."/>
            <person name="Beare D.M."/>
            <person name="Beasley H."/>
            <person name="Beasley O."/>
            <person name="Bird C.P."/>
            <person name="Blakey S.E."/>
            <person name="Bray-Allen S."/>
            <person name="Brook J."/>
            <person name="Brown A.J."/>
            <person name="Brown J.Y."/>
            <person name="Burford D.C."/>
            <person name="Burrill W."/>
            <person name="Burton J."/>
            <person name="Carder C."/>
            <person name="Carter N.P."/>
            <person name="Chapman J.C."/>
            <person name="Clark S.Y."/>
            <person name="Clark G."/>
            <person name="Clee C.M."/>
            <person name="Clegg S."/>
            <person name="Cobley V."/>
            <person name="Collier R.E."/>
            <person name="Collins J.E."/>
            <person name="Colman L.K."/>
            <person name="Corby N.R."/>
            <person name="Coville G.J."/>
            <person name="Culley K.M."/>
            <person name="Dhami P."/>
            <person name="Davies J."/>
            <person name="Dunn M."/>
            <person name="Earthrowl M.E."/>
            <person name="Ellington A.E."/>
            <person name="Evans K.A."/>
            <person name="Faulkner L."/>
            <person name="Francis M.D."/>
            <person name="Frankish A."/>
            <person name="Frankland J."/>
            <person name="French L."/>
            <person name="Garner P."/>
            <person name="Garnett J."/>
            <person name="Ghori M.J."/>
            <person name="Gilby L.M."/>
            <person name="Gillson C.J."/>
            <person name="Glithero R.J."/>
            <person name="Grafham D.V."/>
            <person name="Grant M."/>
            <person name="Gribble S."/>
            <person name="Griffiths C."/>
            <person name="Griffiths M.N.D."/>
            <person name="Hall R."/>
            <person name="Halls K.S."/>
            <person name="Hammond S."/>
            <person name="Harley J.L."/>
            <person name="Hart E.A."/>
            <person name="Heath P.D."/>
            <person name="Heathcott R."/>
            <person name="Holmes S.J."/>
            <person name="Howden P.J."/>
            <person name="Howe K.L."/>
            <person name="Howell G.R."/>
            <person name="Huckle E."/>
            <person name="Humphray S.J."/>
            <person name="Humphries M.D."/>
            <person name="Hunt A.R."/>
            <person name="Johnson C.M."/>
            <person name="Joy A.A."/>
            <person name="Kay M."/>
            <person name="Keenan S.J."/>
            <person name="Kimberley A.M."/>
            <person name="King A."/>
            <person name="Laird G.K."/>
            <person name="Langford C."/>
            <person name="Lawlor S."/>
            <person name="Leongamornlert D.A."/>
            <person name="Leversha M."/>
            <person name="Lloyd C.R."/>
            <person name="Lloyd D.M."/>
            <person name="Loveland J.E."/>
            <person name="Lovell J."/>
            <person name="Martin S."/>
            <person name="Mashreghi-Mohammadi M."/>
            <person name="Maslen G.L."/>
            <person name="Matthews L."/>
            <person name="McCann O.T."/>
            <person name="McLaren S.J."/>
            <person name="McLay K."/>
            <person name="McMurray A."/>
            <person name="Moore M.J.F."/>
            <person name="Mullikin J.C."/>
            <person name="Niblett D."/>
            <person name="Nickerson T."/>
            <person name="Novik K.L."/>
            <person name="Oliver K."/>
            <person name="Overton-Larty E.K."/>
            <person name="Parker A."/>
            <person name="Patel R."/>
            <person name="Pearce A.V."/>
            <person name="Peck A.I."/>
            <person name="Phillimore B.J.C.T."/>
            <person name="Phillips S."/>
            <person name="Plumb R.W."/>
            <person name="Porter K.M."/>
            <person name="Ramsey Y."/>
            <person name="Ranby S.A."/>
            <person name="Rice C.M."/>
            <person name="Ross M.T."/>
            <person name="Searle S.M."/>
            <person name="Sehra H.K."/>
            <person name="Sheridan E."/>
            <person name="Skuce C.D."/>
            <person name="Smith S."/>
            <person name="Smith M."/>
            <person name="Spraggon L."/>
            <person name="Squares S.L."/>
            <person name="Steward C.A."/>
            <person name="Sycamore N."/>
            <person name="Tamlyn-Hall G."/>
            <person name="Tester J."/>
            <person name="Theaker A.J."/>
            <person name="Thomas D.W."/>
            <person name="Thorpe A."/>
            <person name="Tracey A."/>
            <person name="Tromans A."/>
            <person name="Tubby B."/>
            <person name="Wall M."/>
            <person name="Wallis J.M."/>
            <person name="West A.P."/>
            <person name="White S.S."/>
            <person name="Whitehead S.L."/>
            <person name="Whittaker H."/>
            <person name="Wild A."/>
            <person name="Willey D.J."/>
            <person name="Wilmer T.E."/>
            <person name="Wood J.M."/>
            <person name="Wray P.W."/>
            <person name="Wyatt J.C."/>
            <person name="Young L."/>
            <person name="Younger R.M."/>
            <person name="Bentley D.R."/>
            <person name="Coulson A."/>
            <person name="Durbin R.M."/>
            <person name="Hubbard T."/>
            <person name="Sulston J.E."/>
            <person name="Dunham I."/>
            <person name="Rogers J."/>
            <person name="Beck S."/>
        </authorList>
    </citation>
    <scope>NUCLEOTIDE SEQUENCE [LARGE SCALE GENOMIC DNA]</scope>
</reference>
<reference key="2">
    <citation type="journal article" date="1999" name="DNA Res.">
        <title>Prediction of the coding sequences of unidentified human genes. XIV. The complete sequences of 100 new cDNA clones from brain which code for large proteins in vitro.</title>
        <authorList>
            <person name="Kikuno R."/>
            <person name="Nagase T."/>
            <person name="Ishikawa K."/>
            <person name="Hirosawa M."/>
            <person name="Miyajima N."/>
            <person name="Tanaka A."/>
            <person name="Kotani H."/>
            <person name="Nomura N."/>
            <person name="Ohara O."/>
        </authorList>
    </citation>
    <scope>NUCLEOTIDE SEQUENCE [LARGE SCALE MRNA] OF 908-2465</scope>
    <source>
        <tissue>Brain</tissue>
    </source>
</reference>
<reference key="3">
    <citation type="journal article" date="2007" name="BMC Genomics">
        <title>The full-ORF clone resource of the German cDNA consortium.</title>
        <authorList>
            <person name="Bechtel S."/>
            <person name="Rosenfelder H."/>
            <person name="Duda A."/>
            <person name="Schmidt C.P."/>
            <person name="Ernst U."/>
            <person name="Wellenreuther R."/>
            <person name="Mehrle A."/>
            <person name="Schuster C."/>
            <person name="Bahr A."/>
            <person name="Bloecker H."/>
            <person name="Heubner D."/>
            <person name="Hoerlein A."/>
            <person name="Michel G."/>
            <person name="Wedler H."/>
            <person name="Koehrer K."/>
            <person name="Ottenwaelder B."/>
            <person name="Poustka A."/>
            <person name="Wiemann S."/>
            <person name="Schupp I."/>
        </authorList>
    </citation>
    <scope>NUCLEOTIDE SEQUENCE [LARGE SCALE MRNA] OF 1212-2465</scope>
    <source>
        <tissue>Amygdala</tissue>
    </source>
</reference>
<reference key="4">
    <citation type="journal article" date="2004" name="Nat. Genet.">
        <title>Complete sequencing and characterization of 21,243 full-length human cDNAs.</title>
        <authorList>
            <person name="Ota T."/>
            <person name="Suzuki Y."/>
            <person name="Nishikawa T."/>
            <person name="Otsuki T."/>
            <person name="Sugiyama T."/>
            <person name="Irie R."/>
            <person name="Wakamatsu A."/>
            <person name="Hayashi K."/>
            <person name="Sato H."/>
            <person name="Nagai K."/>
            <person name="Kimura K."/>
            <person name="Makita H."/>
            <person name="Sekine M."/>
            <person name="Obayashi M."/>
            <person name="Nishi T."/>
            <person name="Shibahara T."/>
            <person name="Tanaka T."/>
            <person name="Ishii S."/>
            <person name="Yamamoto J."/>
            <person name="Saito K."/>
            <person name="Kawai Y."/>
            <person name="Isono Y."/>
            <person name="Nakamura Y."/>
            <person name="Nagahari K."/>
            <person name="Murakami K."/>
            <person name="Yasuda T."/>
            <person name="Iwayanagi T."/>
            <person name="Wagatsuma M."/>
            <person name="Shiratori A."/>
            <person name="Sudo H."/>
            <person name="Hosoiri T."/>
            <person name="Kaku Y."/>
            <person name="Kodaira H."/>
            <person name="Kondo H."/>
            <person name="Sugawara M."/>
            <person name="Takahashi M."/>
            <person name="Kanda K."/>
            <person name="Yokoi T."/>
            <person name="Furuya T."/>
            <person name="Kikkawa E."/>
            <person name="Omura Y."/>
            <person name="Abe K."/>
            <person name="Kamihara K."/>
            <person name="Katsuta N."/>
            <person name="Sato K."/>
            <person name="Tanikawa M."/>
            <person name="Yamazaki M."/>
            <person name="Ninomiya K."/>
            <person name="Ishibashi T."/>
            <person name="Yamashita H."/>
            <person name="Murakawa K."/>
            <person name="Fujimori K."/>
            <person name="Tanai H."/>
            <person name="Kimata M."/>
            <person name="Watanabe M."/>
            <person name="Hiraoka S."/>
            <person name="Chiba Y."/>
            <person name="Ishida S."/>
            <person name="Ono Y."/>
            <person name="Takiguchi S."/>
            <person name="Watanabe S."/>
            <person name="Yosida M."/>
            <person name="Hotuta T."/>
            <person name="Kusano J."/>
            <person name="Kanehori K."/>
            <person name="Takahashi-Fujii A."/>
            <person name="Hara H."/>
            <person name="Tanase T.-O."/>
            <person name="Nomura Y."/>
            <person name="Togiya S."/>
            <person name="Komai F."/>
            <person name="Hara R."/>
            <person name="Takeuchi K."/>
            <person name="Arita M."/>
            <person name="Imose N."/>
            <person name="Musashino K."/>
            <person name="Yuuki H."/>
            <person name="Oshima A."/>
            <person name="Sasaki N."/>
            <person name="Aotsuka S."/>
            <person name="Yoshikawa Y."/>
            <person name="Matsunawa H."/>
            <person name="Ichihara T."/>
            <person name="Shiohata N."/>
            <person name="Sano S."/>
            <person name="Moriya S."/>
            <person name="Momiyama H."/>
            <person name="Satoh N."/>
            <person name="Takami S."/>
            <person name="Terashima Y."/>
            <person name="Suzuki O."/>
            <person name="Nakagawa S."/>
            <person name="Senoh A."/>
            <person name="Mizoguchi H."/>
            <person name="Goto Y."/>
            <person name="Shimizu F."/>
            <person name="Wakebe H."/>
            <person name="Hishigaki H."/>
            <person name="Watanabe T."/>
            <person name="Sugiyama A."/>
            <person name="Takemoto M."/>
            <person name="Kawakami B."/>
            <person name="Yamazaki M."/>
            <person name="Watanabe K."/>
            <person name="Kumagai A."/>
            <person name="Itakura S."/>
            <person name="Fukuzumi Y."/>
            <person name="Fujimori Y."/>
            <person name="Komiyama M."/>
            <person name="Tashiro H."/>
            <person name="Tanigami A."/>
            <person name="Fujiwara T."/>
            <person name="Ono T."/>
            <person name="Yamada K."/>
            <person name="Fujii Y."/>
            <person name="Ozaki K."/>
            <person name="Hirao M."/>
            <person name="Ohmori Y."/>
            <person name="Kawabata A."/>
            <person name="Hikiji T."/>
            <person name="Kobatake N."/>
            <person name="Inagaki H."/>
            <person name="Ikema Y."/>
            <person name="Okamoto S."/>
            <person name="Okitani R."/>
            <person name="Kawakami T."/>
            <person name="Noguchi S."/>
            <person name="Itoh T."/>
            <person name="Shigeta K."/>
            <person name="Senba T."/>
            <person name="Matsumura K."/>
            <person name="Nakajima Y."/>
            <person name="Mizuno T."/>
            <person name="Morinaga M."/>
            <person name="Sasaki M."/>
            <person name="Togashi T."/>
            <person name="Oyama M."/>
            <person name="Hata H."/>
            <person name="Watanabe M."/>
            <person name="Komatsu T."/>
            <person name="Mizushima-Sugano J."/>
            <person name="Satoh T."/>
            <person name="Shirai Y."/>
            <person name="Takahashi Y."/>
            <person name="Nakagawa K."/>
            <person name="Okumura K."/>
            <person name="Nagase T."/>
            <person name="Nomura N."/>
            <person name="Kikuchi H."/>
            <person name="Masuho Y."/>
            <person name="Yamashita R."/>
            <person name="Nakai K."/>
            <person name="Yada T."/>
            <person name="Nakamura Y."/>
            <person name="Ohara O."/>
            <person name="Isogai T."/>
            <person name="Sugano S."/>
        </authorList>
    </citation>
    <scope>NUCLEOTIDE SEQUENCE [LARGE SCALE MRNA] OF 1326-2465</scope>
</reference>
<reference key="5">
    <citation type="journal article" date="2004" name="Genome Res.">
        <title>The status, quality, and expansion of the NIH full-length cDNA project: the Mammalian Gene Collection (MGC).</title>
        <authorList>
            <consortium name="The MGC Project Team"/>
        </authorList>
    </citation>
    <scope>NUCLEOTIDE SEQUENCE [LARGE SCALE MRNA] OF 1910-2465</scope>
    <source>
        <tissue>Brain</tissue>
    </source>
</reference>
<reference key="6">
    <citation type="journal article" date="2006" name="Science">
        <title>The consensus coding sequences of human breast and colorectal cancers.</title>
        <authorList>
            <person name="Sjoeblom T."/>
            <person name="Jones S."/>
            <person name="Wood L.D."/>
            <person name="Parsons D.W."/>
            <person name="Lin J."/>
            <person name="Barber T.D."/>
            <person name="Mandelker D."/>
            <person name="Leary R.J."/>
            <person name="Ptak J."/>
            <person name="Silliman N."/>
            <person name="Szabo S."/>
            <person name="Buckhaults P."/>
            <person name="Farrell C."/>
            <person name="Meeh P."/>
            <person name="Markowitz S.D."/>
            <person name="Willis J."/>
            <person name="Dawson D."/>
            <person name="Willson J.K.V."/>
            <person name="Gazdar A.F."/>
            <person name="Hartigan J."/>
            <person name="Wu L."/>
            <person name="Liu C."/>
            <person name="Parmigiani G."/>
            <person name="Park B.H."/>
            <person name="Bachman K.E."/>
            <person name="Papadopoulos N."/>
            <person name="Vogelstein B."/>
            <person name="Kinzler K.W."/>
            <person name="Velculescu V.E."/>
        </authorList>
    </citation>
    <scope>VARIANT [LARGE SCALE ANALYSIS] HIS-1155</scope>
</reference>